<protein>
    <recommendedName>
        <fullName>NADH-ubiquinone oxidoreductase chain 3</fullName>
        <ecNumber>7.1.1.2</ecNumber>
    </recommendedName>
    <alternativeName>
        <fullName>NADH dehydrogenase subunit 3</fullName>
    </alternativeName>
</protein>
<comment type="function">
    <text evidence="1">Core subunit of the mitochondrial membrane respiratory chain NADH dehydrogenase (Complex I) that is believed to belong to the minimal assembly required for catalysis. Complex I functions in the transfer of electrons from NADH to the respiratory chain. The immediate electron acceptor for the enzyme is believed to be ubiquinone (By similarity).</text>
</comment>
<comment type="catalytic activity">
    <reaction>
        <text>a ubiquinone + NADH + 5 H(+)(in) = a ubiquinol + NAD(+) + 4 H(+)(out)</text>
        <dbReference type="Rhea" id="RHEA:29091"/>
        <dbReference type="Rhea" id="RHEA-COMP:9565"/>
        <dbReference type="Rhea" id="RHEA-COMP:9566"/>
        <dbReference type="ChEBI" id="CHEBI:15378"/>
        <dbReference type="ChEBI" id="CHEBI:16389"/>
        <dbReference type="ChEBI" id="CHEBI:17976"/>
        <dbReference type="ChEBI" id="CHEBI:57540"/>
        <dbReference type="ChEBI" id="CHEBI:57945"/>
        <dbReference type="EC" id="7.1.1.2"/>
    </reaction>
</comment>
<comment type="subcellular location">
    <subcellularLocation>
        <location evidence="1">Mitochondrion membrane</location>
        <topology evidence="1">Multi-pass membrane protein</topology>
    </subcellularLocation>
</comment>
<comment type="similarity">
    <text evidence="3">Belongs to the complex I subunit 3 family.</text>
</comment>
<name>NU3M_RECAM</name>
<geneLocation type="mitochondrion"/>
<keyword id="KW-0249">Electron transport</keyword>
<keyword id="KW-0472">Membrane</keyword>
<keyword id="KW-0496">Mitochondrion</keyword>
<keyword id="KW-0520">NAD</keyword>
<keyword id="KW-0679">Respiratory chain</keyword>
<keyword id="KW-1278">Translocase</keyword>
<keyword id="KW-0812">Transmembrane</keyword>
<keyword id="KW-1133">Transmembrane helix</keyword>
<keyword id="KW-0813">Transport</keyword>
<keyword id="KW-0830">Ubiquinone</keyword>
<accession>O21273</accession>
<gene>
    <name type="primary">NAD3</name>
</gene>
<dbReference type="EC" id="7.1.1.2"/>
<dbReference type="EMBL" id="AF007261">
    <property type="protein sequence ID" value="AAD11900.1"/>
    <property type="molecule type" value="Genomic_DNA"/>
</dbReference>
<dbReference type="PIR" id="S78167">
    <property type="entry name" value="S78167"/>
</dbReference>
<dbReference type="RefSeq" id="NP_044785.1">
    <property type="nucleotide sequence ID" value="NC_001823.1"/>
</dbReference>
<dbReference type="SMR" id="O21273"/>
<dbReference type="GeneID" id="801095"/>
<dbReference type="GO" id="GO:0031966">
    <property type="term" value="C:mitochondrial membrane"/>
    <property type="evidence" value="ECO:0007669"/>
    <property type="project" value="UniProtKB-SubCell"/>
</dbReference>
<dbReference type="GO" id="GO:0030964">
    <property type="term" value="C:NADH dehydrogenase complex"/>
    <property type="evidence" value="ECO:0007669"/>
    <property type="project" value="TreeGrafter"/>
</dbReference>
<dbReference type="GO" id="GO:0008137">
    <property type="term" value="F:NADH dehydrogenase (ubiquinone) activity"/>
    <property type="evidence" value="ECO:0007669"/>
    <property type="project" value="UniProtKB-EC"/>
</dbReference>
<dbReference type="FunFam" id="1.20.58.1610:FF:000004">
    <property type="entry name" value="NADH-quinone oxidoreductase subunit A"/>
    <property type="match status" value="1"/>
</dbReference>
<dbReference type="Gene3D" id="1.20.58.1610">
    <property type="entry name" value="NADH:ubiquinone/plastoquinone oxidoreductase, chain 3"/>
    <property type="match status" value="1"/>
</dbReference>
<dbReference type="HAMAP" id="MF_01394">
    <property type="entry name" value="NDH1_NuoA"/>
    <property type="match status" value="1"/>
</dbReference>
<dbReference type="InterPro" id="IPR023043">
    <property type="entry name" value="NAD(P)H_OxRDtase_bac/plastid"/>
</dbReference>
<dbReference type="InterPro" id="IPR000440">
    <property type="entry name" value="NADH_UbQ/plastoQ_OxRdtase_su3"/>
</dbReference>
<dbReference type="InterPro" id="IPR038430">
    <property type="entry name" value="NDAH_ubi_oxred_su3_sf"/>
</dbReference>
<dbReference type="PANTHER" id="PTHR11058">
    <property type="entry name" value="NADH-UBIQUINONE OXIDOREDUCTASE CHAIN 3"/>
    <property type="match status" value="1"/>
</dbReference>
<dbReference type="PANTHER" id="PTHR11058:SF9">
    <property type="entry name" value="NADH-UBIQUINONE OXIDOREDUCTASE CHAIN 3"/>
    <property type="match status" value="1"/>
</dbReference>
<dbReference type="Pfam" id="PF00507">
    <property type="entry name" value="Oxidored_q4"/>
    <property type="match status" value="1"/>
</dbReference>
<proteinExistence type="inferred from homology"/>
<feature type="chain" id="PRO_0000117819" description="NADH-ubiquinone oxidoreductase chain 3">
    <location>
        <begin position="1"/>
        <end position="122"/>
    </location>
</feature>
<feature type="transmembrane region" description="Helical" evidence="2">
    <location>
        <begin position="12"/>
        <end position="32"/>
    </location>
</feature>
<feature type="transmembrane region" description="Helical" evidence="2">
    <location>
        <begin position="66"/>
        <end position="86"/>
    </location>
</feature>
<feature type="transmembrane region" description="Helical" evidence="2">
    <location>
        <begin position="91"/>
        <end position="111"/>
    </location>
</feature>
<organism>
    <name type="scientific">Reclinomonas americana</name>
    <dbReference type="NCBI Taxonomy" id="48483"/>
    <lineage>
        <taxon>Eukaryota</taxon>
        <taxon>Discoba</taxon>
        <taxon>Jakobida</taxon>
        <taxon>Histionina</taxon>
        <taxon>Histionidae</taxon>
        <taxon>Reclinomonas</taxon>
    </lineage>
</organism>
<sequence>MNTMILSEYLSVLIFFIFSFGLSCIILGLSYVLATQNADTEKLSPYECGFNPFDDARGAFDVRFYLVAILFIIFDLEVAFLFPWAVALSDVTIFGFWTMFIFLLILTVGFIYEWKKGALDWE</sequence>
<reference key="1">
    <citation type="journal article" date="1997" name="Nature">
        <title>An ancestral mitochondrial DNA resembling a eubacterial genome in miniature.</title>
        <authorList>
            <person name="Lang B.F."/>
            <person name="Burger G."/>
            <person name="O'Kelly C.J."/>
            <person name="Cedergren R."/>
            <person name="Golding G.B."/>
            <person name="Lemieux C."/>
            <person name="Sankoff D."/>
            <person name="Turmel M."/>
            <person name="Gray M.W."/>
        </authorList>
    </citation>
    <scope>NUCLEOTIDE SEQUENCE [GENOMIC DNA]</scope>
    <source>
        <strain>ATCC 50394</strain>
    </source>
</reference>
<evidence type="ECO:0000250" key="1"/>
<evidence type="ECO:0000255" key="2"/>
<evidence type="ECO:0000305" key="3"/>